<gene>
    <name type="primary">thrC</name>
    <name type="ordered locus">MA_1610</name>
</gene>
<organism>
    <name type="scientific">Methanosarcina acetivorans (strain ATCC 35395 / DSM 2834 / JCM 12185 / C2A)</name>
    <dbReference type="NCBI Taxonomy" id="188937"/>
    <lineage>
        <taxon>Archaea</taxon>
        <taxon>Methanobacteriati</taxon>
        <taxon>Methanobacteriota</taxon>
        <taxon>Stenosarchaea group</taxon>
        <taxon>Methanomicrobia</taxon>
        <taxon>Methanosarcinales</taxon>
        <taxon>Methanosarcinaceae</taxon>
        <taxon>Methanosarcina</taxon>
    </lineage>
</organism>
<proteinExistence type="evidence at protein level"/>
<accession>Q8TQD4</accession>
<comment type="function">
    <text evidence="2">Catalyzes the gamma-elimination of phosphate from L-phosphohomoserine and the beta-addition of water to produce L-threonine. Does not catalyze the conversion of O-acetyl-L-homoserine into threonine.</text>
</comment>
<comment type="catalytic activity">
    <reaction evidence="2">
        <text>O-phospho-L-homoserine + H2O = L-threonine + phosphate</text>
        <dbReference type="Rhea" id="RHEA:10840"/>
        <dbReference type="ChEBI" id="CHEBI:15377"/>
        <dbReference type="ChEBI" id="CHEBI:43474"/>
        <dbReference type="ChEBI" id="CHEBI:57590"/>
        <dbReference type="ChEBI" id="CHEBI:57926"/>
        <dbReference type="EC" id="4.2.3.1"/>
    </reaction>
</comment>
<comment type="cofactor">
    <cofactor evidence="2">
        <name>pyridoxal 5'-phosphate</name>
        <dbReference type="ChEBI" id="CHEBI:597326"/>
    </cofactor>
</comment>
<comment type="pathway">
    <text>Amino-acid biosynthesis; L-threonine biosynthesis; L-threonine from L-aspartate: step 5/5.</text>
</comment>
<comment type="subunit">
    <text evidence="2">Homotrimer.</text>
</comment>
<comment type="domain">
    <text evidence="2">The N-terminal 41 amino acids are required for activity.</text>
</comment>
<comment type="similarity">
    <text evidence="3">Belongs to the threonine synthase family.</text>
</comment>
<sequence>MYHLKCIECGAEYSRDEVIYTCSKCDGLLDVIYDYSSIKIDMEKLKTECPSVWKYAKLLPVEREPVTIQEGGTPLYKCDRLAEKIGIKKLYVKHEGMNPTGSFKDRGMTVGVTKALELGMNTVACASTGNTSAALAIYGAKAGIPVVVLLPAGKVALGKVAQALMHGAKVLSIRGNFDDALALVRTLCSQEKIYLLNSINPYRLEGQKTIGFEIADQLDFKVPDRIVLPVGNAGNITAIYKGFREFKILGITDSLPKMTGIQAEGSCPIVKAIKSGAPAITPEENPETVATAIRIGNPVNATKALSAIRESGGTAESVTDEEILAAQKDLARLEGIGVEPASAASVAGLRKLVDMGVIGRDETVVCITTGHLLKDPQTVIDVCEEPTVVDANIDAIREAIFGKAK</sequence>
<reference key="1">
    <citation type="journal article" date="2002" name="Genome Res.">
        <title>The genome of Methanosarcina acetivorans reveals extensive metabolic and physiological diversity.</title>
        <authorList>
            <person name="Galagan J.E."/>
            <person name="Nusbaum C."/>
            <person name="Roy A."/>
            <person name="Endrizzi M.G."/>
            <person name="Macdonald P."/>
            <person name="FitzHugh W."/>
            <person name="Calvo S."/>
            <person name="Engels R."/>
            <person name="Smirnov S."/>
            <person name="Atnoor D."/>
            <person name="Brown A."/>
            <person name="Allen N."/>
            <person name="Naylor J."/>
            <person name="Stange-Thomann N."/>
            <person name="DeArellano K."/>
            <person name="Johnson R."/>
            <person name="Linton L."/>
            <person name="McEwan P."/>
            <person name="McKernan K."/>
            <person name="Talamas J."/>
            <person name="Tirrell A."/>
            <person name="Ye W."/>
            <person name="Zimmer A."/>
            <person name="Barber R.D."/>
            <person name="Cann I."/>
            <person name="Graham D.E."/>
            <person name="Grahame D.A."/>
            <person name="Guss A.M."/>
            <person name="Hedderich R."/>
            <person name="Ingram-Smith C."/>
            <person name="Kuettner H.C."/>
            <person name="Krzycki J.A."/>
            <person name="Leigh J.A."/>
            <person name="Li W."/>
            <person name="Liu J."/>
            <person name="Mukhopadhyay B."/>
            <person name="Reeve J.N."/>
            <person name="Smith K."/>
            <person name="Springer T.A."/>
            <person name="Umayam L.A."/>
            <person name="White O."/>
            <person name="White R.H."/>
            <person name="de Macario E.C."/>
            <person name="Ferry J.G."/>
            <person name="Jarrell K.F."/>
            <person name="Jing H."/>
            <person name="Macario A.J.L."/>
            <person name="Paulsen I.T."/>
            <person name="Pritchett M."/>
            <person name="Sowers K.R."/>
            <person name="Swanson R.V."/>
            <person name="Zinder S.H."/>
            <person name="Lander E."/>
            <person name="Metcalf W.W."/>
            <person name="Birren B."/>
        </authorList>
    </citation>
    <scope>NUCLEOTIDE SEQUENCE [LARGE SCALE GENOMIC DNA]</scope>
    <source>
        <strain>ATCC 35395 / DSM 2834 / JCM 12185 / C2A</strain>
    </source>
</reference>
<reference key="2">
    <citation type="journal article" date="2009" name="Biochem. J.">
        <title>Convergent evolution of coenzyme M biosynthesis in the Methanosarcinales: cysteate synthase evolved from an ancestral threonine synthase.</title>
        <authorList>
            <person name="Graham D.E."/>
            <person name="Taylor S.M."/>
            <person name="Wolf R.Z."/>
            <person name="Namboori S.C."/>
        </authorList>
    </citation>
    <scope>FUNCTION</scope>
    <scope>CATALYTIC ACTIVITY</scope>
    <scope>COFACTOR</scope>
    <scope>DOMAIN</scope>
    <scope>SUBUNIT</scope>
</reference>
<feature type="chain" id="PRO_0000392651" description="Threonine synthase">
    <location>
        <begin position="1"/>
        <end position="405"/>
    </location>
</feature>
<feature type="binding site" evidence="1">
    <location>
        <position position="130"/>
    </location>
    <ligand>
        <name>pyridoxal 5'-phosphate</name>
        <dbReference type="ChEBI" id="CHEBI:597326"/>
    </ligand>
</feature>
<feature type="binding site" evidence="1">
    <location>
        <begin position="231"/>
        <end position="235"/>
    </location>
    <ligand>
        <name>pyridoxal 5'-phosphate</name>
        <dbReference type="ChEBI" id="CHEBI:597326"/>
    </ligand>
</feature>
<feature type="binding site" evidence="1">
    <location>
        <position position="369"/>
    </location>
    <ligand>
        <name>pyridoxal 5'-phosphate</name>
        <dbReference type="ChEBI" id="CHEBI:597326"/>
    </ligand>
</feature>
<feature type="modified residue" description="N6-(pyridoxal phosphate)lysine" evidence="1">
    <location>
        <position position="104"/>
    </location>
</feature>
<evidence type="ECO:0000250" key="1"/>
<evidence type="ECO:0000269" key="2">
    <source>
    </source>
</evidence>
<evidence type="ECO:0000305" key="3"/>
<keyword id="KW-0028">Amino-acid biosynthesis</keyword>
<keyword id="KW-0456">Lyase</keyword>
<keyword id="KW-0663">Pyridoxal phosphate</keyword>
<keyword id="KW-1185">Reference proteome</keyword>
<keyword id="KW-0791">Threonine biosynthesis</keyword>
<protein>
    <recommendedName>
        <fullName>Threonine synthase</fullName>
        <shortName>TS</shortName>
        <ecNumber>4.2.3.1</ecNumber>
    </recommendedName>
</protein>
<dbReference type="EC" id="4.2.3.1"/>
<dbReference type="EMBL" id="AE010299">
    <property type="protein sequence ID" value="AAM05023.1"/>
    <property type="molecule type" value="Genomic_DNA"/>
</dbReference>
<dbReference type="RefSeq" id="WP_011021620.1">
    <property type="nucleotide sequence ID" value="NC_003552.1"/>
</dbReference>
<dbReference type="SMR" id="Q8TQD4"/>
<dbReference type="FunCoup" id="Q8TQD4">
    <property type="interactions" value="103"/>
</dbReference>
<dbReference type="STRING" id="188937.MA_1610"/>
<dbReference type="EnsemblBacteria" id="AAM05023">
    <property type="protein sequence ID" value="AAM05023"/>
    <property type="gene ID" value="MA_1610"/>
</dbReference>
<dbReference type="GeneID" id="1473498"/>
<dbReference type="KEGG" id="mac:MA_1610"/>
<dbReference type="HOGENOM" id="CLU_028142_4_1_2"/>
<dbReference type="InParanoid" id="Q8TQD4"/>
<dbReference type="OrthoDB" id="6371at2157"/>
<dbReference type="PhylomeDB" id="Q8TQD4"/>
<dbReference type="UniPathway" id="UPA00050">
    <property type="reaction ID" value="UER00065"/>
</dbReference>
<dbReference type="Proteomes" id="UP000002487">
    <property type="component" value="Chromosome"/>
</dbReference>
<dbReference type="GO" id="GO:0005737">
    <property type="term" value="C:cytoplasm"/>
    <property type="evidence" value="ECO:0000318"/>
    <property type="project" value="GO_Central"/>
</dbReference>
<dbReference type="GO" id="GO:0030170">
    <property type="term" value="F:pyridoxal phosphate binding"/>
    <property type="evidence" value="ECO:0007669"/>
    <property type="project" value="InterPro"/>
</dbReference>
<dbReference type="GO" id="GO:0004795">
    <property type="term" value="F:threonine synthase activity"/>
    <property type="evidence" value="ECO:0000318"/>
    <property type="project" value="GO_Central"/>
</dbReference>
<dbReference type="GO" id="GO:0019344">
    <property type="term" value="P:cysteine biosynthetic process"/>
    <property type="evidence" value="ECO:0000318"/>
    <property type="project" value="GO_Central"/>
</dbReference>
<dbReference type="GO" id="GO:0009088">
    <property type="term" value="P:threonine biosynthetic process"/>
    <property type="evidence" value="ECO:0007669"/>
    <property type="project" value="UniProtKB-UniPathway"/>
</dbReference>
<dbReference type="CDD" id="cd01563">
    <property type="entry name" value="Thr-synth_1"/>
    <property type="match status" value="1"/>
</dbReference>
<dbReference type="FunFam" id="3.40.50.1100:FF:000013">
    <property type="entry name" value="Threonine synthase"/>
    <property type="match status" value="1"/>
</dbReference>
<dbReference type="FunFam" id="3.40.50.1100:FF:000014">
    <property type="entry name" value="Threonine synthase"/>
    <property type="match status" value="1"/>
</dbReference>
<dbReference type="Gene3D" id="3.40.50.1100">
    <property type="match status" value="2"/>
</dbReference>
<dbReference type="InterPro" id="IPR050147">
    <property type="entry name" value="Ser/Thr_Dehydratase"/>
</dbReference>
<dbReference type="InterPro" id="IPR000634">
    <property type="entry name" value="Ser/Thr_deHydtase_PyrdxlP-BS"/>
</dbReference>
<dbReference type="InterPro" id="IPR004450">
    <property type="entry name" value="Thr_synthase-like"/>
</dbReference>
<dbReference type="InterPro" id="IPR026260">
    <property type="entry name" value="Thr_Synthase_bac/arc"/>
</dbReference>
<dbReference type="InterPro" id="IPR001926">
    <property type="entry name" value="TrpB-like_PALP"/>
</dbReference>
<dbReference type="InterPro" id="IPR036052">
    <property type="entry name" value="TrpB-like_PALP_sf"/>
</dbReference>
<dbReference type="NCBIfam" id="NF006050">
    <property type="entry name" value="PRK08197.1"/>
    <property type="match status" value="1"/>
</dbReference>
<dbReference type="NCBIfam" id="TIGR00260">
    <property type="entry name" value="thrC"/>
    <property type="match status" value="1"/>
</dbReference>
<dbReference type="PANTHER" id="PTHR48078:SF6">
    <property type="entry name" value="L-THREONINE DEHYDRATASE CATABOLIC TDCB"/>
    <property type="match status" value="1"/>
</dbReference>
<dbReference type="PANTHER" id="PTHR48078">
    <property type="entry name" value="THREONINE DEHYDRATASE, MITOCHONDRIAL-RELATED"/>
    <property type="match status" value="1"/>
</dbReference>
<dbReference type="Pfam" id="PF00291">
    <property type="entry name" value="PALP"/>
    <property type="match status" value="1"/>
</dbReference>
<dbReference type="PIRSF" id="PIRSF038945">
    <property type="entry name" value="Thr_synthase"/>
    <property type="match status" value="1"/>
</dbReference>
<dbReference type="SUPFAM" id="SSF53686">
    <property type="entry name" value="Tryptophan synthase beta subunit-like PLP-dependent enzymes"/>
    <property type="match status" value="1"/>
</dbReference>
<dbReference type="PROSITE" id="PS00165">
    <property type="entry name" value="DEHYDRATASE_SER_THR"/>
    <property type="match status" value="1"/>
</dbReference>
<name>THRC_METAC</name>